<proteinExistence type="inferred from homology"/>
<organism>
    <name type="scientific">Alteromonas mediterranea (strain DSM 17117 / CIP 110805 / LMG 28347 / Deep ecotype)</name>
    <dbReference type="NCBI Taxonomy" id="1774373"/>
    <lineage>
        <taxon>Bacteria</taxon>
        <taxon>Pseudomonadati</taxon>
        <taxon>Pseudomonadota</taxon>
        <taxon>Gammaproteobacteria</taxon>
        <taxon>Alteromonadales</taxon>
        <taxon>Alteromonadaceae</taxon>
        <taxon>Alteromonas/Salinimonas group</taxon>
        <taxon>Alteromonas</taxon>
    </lineage>
</organism>
<evidence type="ECO:0000255" key="1">
    <source>
        <dbReference type="HAMAP-Rule" id="MF_00137"/>
    </source>
</evidence>
<comment type="catalytic activity">
    <reaction evidence="1">
        <text>5-amino-1-(5-phospho-D-ribosyl)imidazole-4-carboxylate + L-aspartate + ATP = (2S)-2-[5-amino-1-(5-phospho-beta-D-ribosyl)imidazole-4-carboxamido]succinate + ADP + phosphate + 2 H(+)</text>
        <dbReference type="Rhea" id="RHEA:22628"/>
        <dbReference type="ChEBI" id="CHEBI:15378"/>
        <dbReference type="ChEBI" id="CHEBI:29991"/>
        <dbReference type="ChEBI" id="CHEBI:30616"/>
        <dbReference type="ChEBI" id="CHEBI:43474"/>
        <dbReference type="ChEBI" id="CHEBI:58443"/>
        <dbReference type="ChEBI" id="CHEBI:77657"/>
        <dbReference type="ChEBI" id="CHEBI:456216"/>
        <dbReference type="EC" id="6.3.2.6"/>
    </reaction>
</comment>
<comment type="pathway">
    <text evidence="1">Purine metabolism; IMP biosynthesis via de novo pathway; 5-amino-1-(5-phospho-D-ribosyl)imidazole-4-carboxamide from 5-amino-1-(5-phospho-D-ribosyl)imidazole-4-carboxylate: step 1/2.</text>
</comment>
<comment type="similarity">
    <text evidence="1">Belongs to the SAICAR synthetase family.</text>
</comment>
<accession>B4RZW3</accession>
<accession>F2G3C8</accession>
<reference key="1">
    <citation type="journal article" date="2008" name="ISME J.">
        <title>Comparative genomics of two ecotypes of the marine planktonic copiotroph Alteromonas macleodii suggests alternative lifestyles associated with different kinds of particulate organic matter.</title>
        <authorList>
            <person name="Ivars-Martinez E."/>
            <person name="Martin-Cuadrado A.-B."/>
            <person name="D'Auria G."/>
            <person name="Mira A."/>
            <person name="Ferriera S."/>
            <person name="Johnson J."/>
            <person name="Friedman R."/>
            <person name="Rodriguez-Valera F."/>
        </authorList>
    </citation>
    <scope>NUCLEOTIDE SEQUENCE [LARGE SCALE GENOMIC DNA]</scope>
    <source>
        <strain>DSM 17117 / CIP 110805 / LMG 28347 / Deep ecotype</strain>
    </source>
</reference>
<keyword id="KW-0067">ATP-binding</keyword>
<keyword id="KW-0436">Ligase</keyword>
<keyword id="KW-0547">Nucleotide-binding</keyword>
<keyword id="KW-0658">Purine biosynthesis</keyword>
<gene>
    <name evidence="1" type="primary">purC</name>
    <name type="ordered locus">MADE_1010810</name>
</gene>
<dbReference type="EC" id="6.3.2.6" evidence="1"/>
<dbReference type="EMBL" id="CP001103">
    <property type="protein sequence ID" value="AEA98300.1"/>
    <property type="molecule type" value="Genomic_DNA"/>
</dbReference>
<dbReference type="RefSeq" id="WP_012518623.1">
    <property type="nucleotide sequence ID" value="NC_011138.3"/>
</dbReference>
<dbReference type="SMR" id="B4RZW3"/>
<dbReference type="KEGG" id="amc:MADE_1010810"/>
<dbReference type="HOGENOM" id="CLU_061495_2_0_6"/>
<dbReference type="UniPathway" id="UPA00074">
    <property type="reaction ID" value="UER00131"/>
</dbReference>
<dbReference type="Proteomes" id="UP000001870">
    <property type="component" value="Chromosome"/>
</dbReference>
<dbReference type="GO" id="GO:0005829">
    <property type="term" value="C:cytosol"/>
    <property type="evidence" value="ECO:0007669"/>
    <property type="project" value="TreeGrafter"/>
</dbReference>
<dbReference type="GO" id="GO:0005524">
    <property type="term" value="F:ATP binding"/>
    <property type="evidence" value="ECO:0007669"/>
    <property type="project" value="UniProtKB-KW"/>
</dbReference>
<dbReference type="GO" id="GO:0004639">
    <property type="term" value="F:phosphoribosylaminoimidazolesuccinocarboxamide synthase activity"/>
    <property type="evidence" value="ECO:0007669"/>
    <property type="project" value="UniProtKB-UniRule"/>
</dbReference>
<dbReference type="GO" id="GO:0006189">
    <property type="term" value="P:'de novo' IMP biosynthetic process"/>
    <property type="evidence" value="ECO:0007669"/>
    <property type="project" value="UniProtKB-UniRule"/>
</dbReference>
<dbReference type="GO" id="GO:0009236">
    <property type="term" value="P:cobalamin biosynthetic process"/>
    <property type="evidence" value="ECO:0007669"/>
    <property type="project" value="InterPro"/>
</dbReference>
<dbReference type="CDD" id="cd01415">
    <property type="entry name" value="SAICAR_synt_PurC"/>
    <property type="match status" value="1"/>
</dbReference>
<dbReference type="FunFam" id="3.30.200.20:FF:000086">
    <property type="entry name" value="Phosphoribosylaminoimidazole-succinocarboxamide synthase"/>
    <property type="match status" value="1"/>
</dbReference>
<dbReference type="FunFam" id="3.30.470.20:FF:000006">
    <property type="entry name" value="Phosphoribosylaminoimidazole-succinocarboxamide synthase"/>
    <property type="match status" value="1"/>
</dbReference>
<dbReference type="Gene3D" id="3.30.470.20">
    <property type="entry name" value="ATP-grasp fold, B domain"/>
    <property type="match status" value="1"/>
</dbReference>
<dbReference type="Gene3D" id="3.30.200.20">
    <property type="entry name" value="Phosphorylase Kinase, domain 1"/>
    <property type="match status" value="1"/>
</dbReference>
<dbReference type="HAMAP" id="MF_00137">
    <property type="entry name" value="SAICAR_synth"/>
    <property type="match status" value="1"/>
</dbReference>
<dbReference type="InterPro" id="IPR028923">
    <property type="entry name" value="SAICAR_synt/ADE2_N"/>
</dbReference>
<dbReference type="InterPro" id="IPR033934">
    <property type="entry name" value="SAICAR_synt_PurC"/>
</dbReference>
<dbReference type="InterPro" id="IPR001636">
    <property type="entry name" value="SAICAR_synth"/>
</dbReference>
<dbReference type="InterPro" id="IPR050089">
    <property type="entry name" value="SAICAR_synthetase"/>
</dbReference>
<dbReference type="InterPro" id="IPR018236">
    <property type="entry name" value="SAICAR_synthetase_CS"/>
</dbReference>
<dbReference type="NCBIfam" id="TIGR00081">
    <property type="entry name" value="purC"/>
    <property type="match status" value="1"/>
</dbReference>
<dbReference type="PANTHER" id="PTHR43599">
    <property type="entry name" value="MULTIFUNCTIONAL PROTEIN ADE2"/>
    <property type="match status" value="1"/>
</dbReference>
<dbReference type="PANTHER" id="PTHR43599:SF3">
    <property type="entry name" value="SI:DKEY-6E2.2"/>
    <property type="match status" value="1"/>
</dbReference>
<dbReference type="Pfam" id="PF01259">
    <property type="entry name" value="SAICAR_synt"/>
    <property type="match status" value="1"/>
</dbReference>
<dbReference type="SUPFAM" id="SSF56104">
    <property type="entry name" value="SAICAR synthase-like"/>
    <property type="match status" value="1"/>
</dbReference>
<dbReference type="PROSITE" id="PS01057">
    <property type="entry name" value="SAICAR_SYNTHETASE_1"/>
    <property type="match status" value="1"/>
</dbReference>
<dbReference type="PROSITE" id="PS01058">
    <property type="entry name" value="SAICAR_SYNTHETASE_2"/>
    <property type="match status" value="1"/>
</dbReference>
<protein>
    <recommendedName>
        <fullName evidence="1">Phosphoribosylaminoimidazole-succinocarboxamide synthase</fullName>
        <ecNumber evidence="1">6.3.2.6</ecNumber>
    </recommendedName>
    <alternativeName>
        <fullName evidence="1">SAICAR synthetase</fullName>
    </alternativeName>
</protein>
<sequence>MEKRDELYRGKAKTVYYTDDSDKLILHFRNDTSAFDGEKIEQLDRKGEVNNKFNHFIMTKLEEAGVATQVEALISDTESLVKKLDMIPVECVVRNLSAGSLVRRLGVEEGQALNPPIFEFFLKNDALHDPMVNDYHILSFGWATQEQIAEMKALTFKVNNVLKALFDDAGMLLVDYKLEFGVDKDGNIVLGDEFTPDGCRLWDKETRKKMDKDRFRQGLGSVVETYIEVAERLGLSL</sequence>
<feature type="chain" id="PRO_1000095962" description="Phosphoribosylaminoimidazole-succinocarboxamide synthase">
    <location>
        <begin position="1"/>
        <end position="237"/>
    </location>
</feature>
<name>PUR7_ALTMD</name>